<sequence length="475" mass="50894">MTQIIHIVGGGLAGSEAAWQVAEAGHRAVIHEMRPVRGTEAHRTDGLAELVCSNSFRSDDPEGNAVGLLHQEMRSLGSLIMRAADTNQVPAGGALAVDREGFSAAVTRALEQHPNVTLVRGEVEGLPPEAWGPCIVATGPLTAPALAEGIRGLTGAESLAFFDAIAPIVHRDSIDMDVAWFQSRYDKPGPGGTGADYLNCPMSREQYDTFVAALVAGEKIGFKQWEGTPYFDGCLPVEVMAERGPETLRHGPMKPVGLTNPRDPLVKPCAIVQLRQDNALGTLYNMVGFQTKLTYSEQVRIFRMIPGLERAEFARLGGLHRNTYLDSPRLLDATLRLRARPSLRFAGQITGCEGYVESAAVGLMAGRFAVAEAAGRPLAPLPQSTALGALIAHITGGHLMADGEANAPRSFQPMNVNFGLFPPLERAPRNETGRRLRGPEKAALKKRALTDRARADLALWLEGARDGAARPAAAE</sequence>
<proteinExistence type="inferred from homology"/>
<dbReference type="EC" id="2.1.1.74" evidence="1"/>
<dbReference type="EMBL" id="CP001001">
    <property type="protein sequence ID" value="ACB23568.1"/>
    <property type="molecule type" value="Genomic_DNA"/>
</dbReference>
<dbReference type="RefSeq" id="WP_012318556.1">
    <property type="nucleotide sequence ID" value="NC_010505.1"/>
</dbReference>
<dbReference type="SMR" id="B1M5H7"/>
<dbReference type="STRING" id="426355.Mrad2831_1573"/>
<dbReference type="GeneID" id="6137601"/>
<dbReference type="KEGG" id="mrd:Mrad2831_1573"/>
<dbReference type="eggNOG" id="COG1206">
    <property type="taxonomic scope" value="Bacteria"/>
</dbReference>
<dbReference type="HOGENOM" id="CLU_033057_1_0_5"/>
<dbReference type="OrthoDB" id="9803114at2"/>
<dbReference type="Proteomes" id="UP000006589">
    <property type="component" value="Chromosome"/>
</dbReference>
<dbReference type="GO" id="GO:0005829">
    <property type="term" value="C:cytosol"/>
    <property type="evidence" value="ECO:0007669"/>
    <property type="project" value="TreeGrafter"/>
</dbReference>
<dbReference type="GO" id="GO:0050660">
    <property type="term" value="F:flavin adenine dinucleotide binding"/>
    <property type="evidence" value="ECO:0007669"/>
    <property type="project" value="UniProtKB-UniRule"/>
</dbReference>
<dbReference type="GO" id="GO:0047151">
    <property type="term" value="F:tRNA (uracil(54)-C5)-methyltransferase activity, 5,10-methylenetetrahydrofolate-dependent"/>
    <property type="evidence" value="ECO:0007669"/>
    <property type="project" value="UniProtKB-UniRule"/>
</dbReference>
<dbReference type="GO" id="GO:0030488">
    <property type="term" value="P:tRNA methylation"/>
    <property type="evidence" value="ECO:0007669"/>
    <property type="project" value="TreeGrafter"/>
</dbReference>
<dbReference type="GO" id="GO:0002098">
    <property type="term" value="P:tRNA wobble uridine modification"/>
    <property type="evidence" value="ECO:0007669"/>
    <property type="project" value="TreeGrafter"/>
</dbReference>
<dbReference type="Gene3D" id="3.50.50.60">
    <property type="entry name" value="FAD/NAD(P)-binding domain"/>
    <property type="match status" value="2"/>
</dbReference>
<dbReference type="HAMAP" id="MF_01037">
    <property type="entry name" value="TrmFO"/>
    <property type="match status" value="1"/>
</dbReference>
<dbReference type="InterPro" id="IPR036188">
    <property type="entry name" value="FAD/NAD-bd_sf"/>
</dbReference>
<dbReference type="InterPro" id="IPR002218">
    <property type="entry name" value="MnmG-rel"/>
</dbReference>
<dbReference type="InterPro" id="IPR020595">
    <property type="entry name" value="MnmG-rel_CS"/>
</dbReference>
<dbReference type="InterPro" id="IPR040131">
    <property type="entry name" value="MnmG_N"/>
</dbReference>
<dbReference type="InterPro" id="IPR004417">
    <property type="entry name" value="TrmFO"/>
</dbReference>
<dbReference type="NCBIfam" id="TIGR00137">
    <property type="entry name" value="gid_trmFO"/>
    <property type="match status" value="1"/>
</dbReference>
<dbReference type="NCBIfam" id="NF003739">
    <property type="entry name" value="PRK05335.1"/>
    <property type="match status" value="1"/>
</dbReference>
<dbReference type="PANTHER" id="PTHR11806">
    <property type="entry name" value="GLUCOSE INHIBITED DIVISION PROTEIN A"/>
    <property type="match status" value="1"/>
</dbReference>
<dbReference type="PANTHER" id="PTHR11806:SF2">
    <property type="entry name" value="METHYLENETETRAHYDROFOLATE--TRNA-(URACIL-5-)-METHYLTRANSFERASE TRMFO"/>
    <property type="match status" value="1"/>
</dbReference>
<dbReference type="Pfam" id="PF01134">
    <property type="entry name" value="GIDA"/>
    <property type="match status" value="1"/>
</dbReference>
<dbReference type="SUPFAM" id="SSF51905">
    <property type="entry name" value="FAD/NAD(P)-binding domain"/>
    <property type="match status" value="1"/>
</dbReference>
<dbReference type="PROSITE" id="PS01281">
    <property type="entry name" value="GIDA_2"/>
    <property type="match status" value="1"/>
</dbReference>
<keyword id="KW-0963">Cytoplasm</keyword>
<keyword id="KW-0274">FAD</keyword>
<keyword id="KW-0285">Flavoprotein</keyword>
<keyword id="KW-0489">Methyltransferase</keyword>
<keyword id="KW-0520">NAD</keyword>
<keyword id="KW-0521">NADP</keyword>
<keyword id="KW-0808">Transferase</keyword>
<keyword id="KW-0819">tRNA processing</keyword>
<name>TRMFO_METRJ</name>
<organism>
    <name type="scientific">Methylobacterium radiotolerans (strain ATCC 27329 / DSM 1819 / JCM 2831 / NBRC 15690 / NCIMB 10815 / 0-1)</name>
    <dbReference type="NCBI Taxonomy" id="426355"/>
    <lineage>
        <taxon>Bacteria</taxon>
        <taxon>Pseudomonadati</taxon>
        <taxon>Pseudomonadota</taxon>
        <taxon>Alphaproteobacteria</taxon>
        <taxon>Hyphomicrobiales</taxon>
        <taxon>Methylobacteriaceae</taxon>
        <taxon>Methylobacterium</taxon>
    </lineage>
</organism>
<gene>
    <name evidence="1" type="primary">trmFO</name>
    <name type="ordered locus">Mrad2831_1573</name>
</gene>
<reference key="1">
    <citation type="submission" date="2008-03" db="EMBL/GenBank/DDBJ databases">
        <title>Complete sequence of chromosome of Methylobacterium radiotolerans JCM 2831.</title>
        <authorList>
            <consortium name="US DOE Joint Genome Institute"/>
            <person name="Copeland A."/>
            <person name="Lucas S."/>
            <person name="Lapidus A."/>
            <person name="Glavina del Rio T."/>
            <person name="Dalin E."/>
            <person name="Tice H."/>
            <person name="Bruce D."/>
            <person name="Goodwin L."/>
            <person name="Pitluck S."/>
            <person name="Kiss H."/>
            <person name="Brettin T."/>
            <person name="Detter J.C."/>
            <person name="Han C."/>
            <person name="Kuske C.R."/>
            <person name="Schmutz J."/>
            <person name="Larimer F."/>
            <person name="Land M."/>
            <person name="Hauser L."/>
            <person name="Kyrpides N."/>
            <person name="Mikhailova N."/>
            <person name="Marx C.J."/>
            <person name="Richardson P."/>
        </authorList>
    </citation>
    <scope>NUCLEOTIDE SEQUENCE [LARGE SCALE GENOMIC DNA]</scope>
    <source>
        <strain>ATCC 27329 / DSM 1819 / JCM 2831 / NBRC 15690 / NCIMB 10815 / 0-1</strain>
    </source>
</reference>
<protein>
    <recommendedName>
        <fullName evidence="1">Methylenetetrahydrofolate--tRNA-(uracil-5-)-methyltransferase TrmFO</fullName>
        <ecNumber evidence="1">2.1.1.74</ecNumber>
    </recommendedName>
    <alternativeName>
        <fullName evidence="1">Folate-dependent tRNA (uracil-5-)-methyltransferase</fullName>
    </alternativeName>
    <alternativeName>
        <fullName evidence="1">Folate-dependent tRNA(M-5-U54)-methyltransferase</fullName>
    </alternativeName>
</protein>
<evidence type="ECO:0000255" key="1">
    <source>
        <dbReference type="HAMAP-Rule" id="MF_01037"/>
    </source>
</evidence>
<evidence type="ECO:0000256" key="2">
    <source>
        <dbReference type="SAM" id="MobiDB-lite"/>
    </source>
</evidence>
<comment type="function">
    <text evidence="1">Catalyzes the folate-dependent formation of 5-methyl-uridine at position 54 (M-5-U54) in all tRNAs.</text>
</comment>
<comment type="catalytic activity">
    <reaction evidence="1">
        <text>uridine(54) in tRNA + (6R)-5,10-methylene-5,6,7,8-tetrahydrofolate + NADH + H(+) = 5-methyluridine(54) in tRNA + (6S)-5,6,7,8-tetrahydrofolate + NAD(+)</text>
        <dbReference type="Rhea" id="RHEA:16873"/>
        <dbReference type="Rhea" id="RHEA-COMP:10167"/>
        <dbReference type="Rhea" id="RHEA-COMP:10193"/>
        <dbReference type="ChEBI" id="CHEBI:15378"/>
        <dbReference type="ChEBI" id="CHEBI:15636"/>
        <dbReference type="ChEBI" id="CHEBI:57453"/>
        <dbReference type="ChEBI" id="CHEBI:57540"/>
        <dbReference type="ChEBI" id="CHEBI:57945"/>
        <dbReference type="ChEBI" id="CHEBI:65315"/>
        <dbReference type="ChEBI" id="CHEBI:74447"/>
        <dbReference type="EC" id="2.1.1.74"/>
    </reaction>
</comment>
<comment type="catalytic activity">
    <reaction evidence="1">
        <text>uridine(54) in tRNA + (6R)-5,10-methylene-5,6,7,8-tetrahydrofolate + NADPH + H(+) = 5-methyluridine(54) in tRNA + (6S)-5,6,7,8-tetrahydrofolate + NADP(+)</text>
        <dbReference type="Rhea" id="RHEA:62372"/>
        <dbReference type="Rhea" id="RHEA-COMP:10167"/>
        <dbReference type="Rhea" id="RHEA-COMP:10193"/>
        <dbReference type="ChEBI" id="CHEBI:15378"/>
        <dbReference type="ChEBI" id="CHEBI:15636"/>
        <dbReference type="ChEBI" id="CHEBI:57453"/>
        <dbReference type="ChEBI" id="CHEBI:57783"/>
        <dbReference type="ChEBI" id="CHEBI:58349"/>
        <dbReference type="ChEBI" id="CHEBI:65315"/>
        <dbReference type="ChEBI" id="CHEBI:74447"/>
        <dbReference type="EC" id="2.1.1.74"/>
    </reaction>
</comment>
<comment type="cofactor">
    <cofactor evidence="1">
        <name>FAD</name>
        <dbReference type="ChEBI" id="CHEBI:57692"/>
    </cofactor>
</comment>
<comment type="subcellular location">
    <subcellularLocation>
        <location evidence="1">Cytoplasm</location>
    </subcellularLocation>
</comment>
<comment type="similarity">
    <text evidence="1">Belongs to the MnmG family. TrmFO subfamily.</text>
</comment>
<accession>B1M5H7</accession>
<feature type="chain" id="PRO_0000346359" description="Methylenetetrahydrofolate--tRNA-(uracil-5-)-methyltransferase TrmFO">
    <location>
        <begin position="1"/>
        <end position="475"/>
    </location>
</feature>
<feature type="region of interest" description="Disordered" evidence="2">
    <location>
        <begin position="427"/>
        <end position="447"/>
    </location>
</feature>
<feature type="binding site" evidence="1">
    <location>
        <begin position="9"/>
        <end position="14"/>
    </location>
    <ligand>
        <name>FAD</name>
        <dbReference type="ChEBI" id="CHEBI:57692"/>
    </ligand>
</feature>